<comment type="function">
    <text evidence="1">LuxC is the fatty acid reductase enzyme responsible for synthesis of the aldehyde substrate for the luminescent reaction catalyzed by luciferase.</text>
</comment>
<comment type="catalytic activity">
    <reaction evidence="1">
        <text>a long-chain fatty aldehyde + NADP(+) + CoA = a long-chain fatty acyl-CoA + NADPH + H(+)</text>
        <dbReference type="Rhea" id="RHEA:15437"/>
        <dbReference type="ChEBI" id="CHEBI:15378"/>
        <dbReference type="ChEBI" id="CHEBI:17176"/>
        <dbReference type="ChEBI" id="CHEBI:57287"/>
        <dbReference type="ChEBI" id="CHEBI:57783"/>
        <dbReference type="ChEBI" id="CHEBI:58349"/>
        <dbReference type="ChEBI" id="CHEBI:83139"/>
        <dbReference type="EC" id="1.2.1.50"/>
    </reaction>
</comment>
<comment type="pathway">
    <text>Lipid metabolism; fatty acid reduction for biolumincescence.</text>
</comment>
<comment type="similarity">
    <text evidence="2">Belongs to the LuxC family.</text>
</comment>
<sequence length="480" mass="54847">MNKKISFIINGRVEIFPESDDLVQSINFGDNSVHLPVLNDSQVKNIIDYNENNELQLHNIINFLYTVGQRWKNEEYSRRRTYIRDLKRYMGYSEEMAKLEANWISMILCSKGGLYDLVKNELGSRHIMDEWLPQDESYIRAFPKGKSVHLLTGNVPLSGVLSILRAILTKNQCIIKTSSTDPFTANALALSFIDVDPHHPVTRSLSVVYWQHQGDISLAKEIMQHADVVVAWGGEDAINWAVKHAPPDIDVMKFGPKKSFCIIDNPVDLVSAATGAAHDVCFYDQQACFSTQNIYYMGSHYEEFKLALIEKLNLYAHILPNTKKDFDEKAAYSLVQKECLFAGLKVEVDVHQRWMVIESNAGVELNQPLGRCVYLHHVDNIEQILPYVRKNKTQTISVFPWEAALKYRDLLALKGAERIVEAGMNNIFRVGGAHDGMRPLQRLVTYISHERPSHYTAKDVAVEIEQTRFLEEDKFLVFVP</sequence>
<proteinExistence type="inferred from homology"/>
<name>LUXC_PHOLU</name>
<protein>
    <recommendedName>
        <fullName evidence="2">Long-chain acyl-protein thioester reductase</fullName>
        <ecNumber evidence="1">1.2.1.50</ecNumber>
    </recommendedName>
    <alternativeName>
        <fullName>Acyl-CoA reductase</fullName>
    </alternativeName>
</protein>
<dbReference type="EC" id="1.2.1.50" evidence="1"/>
<dbReference type="EMBL" id="M62917">
    <property type="protein sequence ID" value="AAA63563.1"/>
    <property type="molecule type" value="Genomic_DNA"/>
</dbReference>
<dbReference type="EMBL" id="M90092">
    <property type="protein sequence ID" value="AAD05355.1"/>
    <property type="molecule type" value="Genomic_DNA"/>
</dbReference>
<dbReference type="PIR" id="A42951">
    <property type="entry name" value="A42951"/>
</dbReference>
<dbReference type="SMR" id="P23113"/>
<dbReference type="STRING" id="29488.KS18_21610"/>
<dbReference type="UniPathway" id="UPA00569"/>
<dbReference type="GO" id="GO:0003995">
    <property type="term" value="F:acyl-CoA dehydrogenase activity"/>
    <property type="evidence" value="ECO:0007669"/>
    <property type="project" value="InterPro"/>
</dbReference>
<dbReference type="GO" id="GO:0050062">
    <property type="term" value="F:long-chain-fatty-acyl-CoA reductase activity"/>
    <property type="evidence" value="ECO:0007669"/>
    <property type="project" value="UniProtKB-EC"/>
</dbReference>
<dbReference type="GO" id="GO:0008218">
    <property type="term" value="P:bioluminescence"/>
    <property type="evidence" value="ECO:0007669"/>
    <property type="project" value="UniProtKB-KW"/>
</dbReference>
<dbReference type="CDD" id="cd07080">
    <property type="entry name" value="ALDH_Acyl-CoA-Red_LuxC"/>
    <property type="match status" value="1"/>
</dbReference>
<dbReference type="Gene3D" id="3.40.605.10">
    <property type="entry name" value="Aldehyde Dehydrogenase, Chain A, domain 1"/>
    <property type="match status" value="1"/>
</dbReference>
<dbReference type="Gene3D" id="3.40.309.10">
    <property type="entry name" value="Aldehyde Dehydrogenase, Chain A, domain 2"/>
    <property type="match status" value="1"/>
</dbReference>
<dbReference type="InterPro" id="IPR016161">
    <property type="entry name" value="Ald_DH/histidinol_DH"/>
</dbReference>
<dbReference type="InterPro" id="IPR016163">
    <property type="entry name" value="Ald_DH_C"/>
</dbReference>
<dbReference type="InterPro" id="IPR016162">
    <property type="entry name" value="Ald_DH_N"/>
</dbReference>
<dbReference type="InterPro" id="IPR008670">
    <property type="entry name" value="CoA_reduct_LuxC"/>
</dbReference>
<dbReference type="Pfam" id="PF05893">
    <property type="entry name" value="LuxC"/>
    <property type="match status" value="1"/>
</dbReference>
<dbReference type="PIRSF" id="PIRSF009414">
    <property type="entry name" value="LuxC"/>
    <property type="match status" value="1"/>
</dbReference>
<dbReference type="SUPFAM" id="SSF53720">
    <property type="entry name" value="ALDH-like"/>
    <property type="match status" value="1"/>
</dbReference>
<evidence type="ECO:0000250" key="1">
    <source>
        <dbReference type="UniProtKB" id="P19841"/>
    </source>
</evidence>
<evidence type="ECO:0000305" key="2"/>
<organism>
    <name type="scientific">Photorhabdus luminescens</name>
    <name type="common">Xenorhabdus luminescens</name>
    <dbReference type="NCBI Taxonomy" id="29488"/>
    <lineage>
        <taxon>Bacteria</taxon>
        <taxon>Pseudomonadati</taxon>
        <taxon>Pseudomonadota</taxon>
        <taxon>Gammaproteobacteria</taxon>
        <taxon>Enterobacterales</taxon>
        <taxon>Morganellaceae</taxon>
        <taxon>Photorhabdus</taxon>
    </lineage>
</organism>
<accession>P23113</accession>
<accession>Q56820</accession>
<keyword id="KW-0455">Luminescence</keyword>
<keyword id="KW-0521">NADP</keyword>
<keyword id="KW-0560">Oxidoreductase</keyword>
<reference key="1">
    <citation type="journal article" date="1991" name="J. Bacteriol.">
        <title>Cloning and nucleotide sequences of lux genes and characterization of luciferase of Xenorhabdus luminescens from a human wound.</title>
        <authorList>
            <person name="Xi L."/>
            <person name="Cho K.W."/>
            <person name="Tu S.C."/>
        </authorList>
    </citation>
    <scope>NUCLEOTIDE SEQUENCE [GENOMIC DNA]</scope>
    <source>
        <strain>Hw</strain>
    </source>
</reference>
<reference key="2">
    <citation type="journal article" date="1992" name="J. Bacteriol.">
        <title>Multiple repetitive elements and organization of the lux operons of luminescent terrestrial bacteria.</title>
        <authorList>
            <person name="Meighen E.A."/>
            <person name="Szittner R.B."/>
        </authorList>
    </citation>
    <scope>NUCLEOTIDE SEQUENCE [GENOMIC DNA]</scope>
    <source>
        <strain>Hw</strain>
    </source>
</reference>
<feature type="chain" id="PRO_0000220199" description="Long-chain acyl-protein thioester reductase">
    <location>
        <begin position="1"/>
        <end position="480"/>
    </location>
</feature>
<feature type="sequence conflict" description="In Ref. 1; AAA63563." evidence="2" ref="1">
    <original>NK</original>
    <variation>PP</variation>
    <location>
        <begin position="2"/>
        <end position="3"/>
    </location>
</feature>
<feature type="sequence conflict" description="In Ref. 1; AAA63563." evidence="2" ref="1">
    <original>T</original>
    <variation>P</variation>
    <location>
        <position position="81"/>
    </location>
</feature>
<feature type="sequence conflict" description="In Ref. 1; AAA63563." evidence="2" ref="1">
    <original>LKRYMGYSEE</original>
    <variation>PKKIYGIFRR</variation>
    <location>
        <begin position="86"/>
        <end position="95"/>
    </location>
</feature>
<feature type="sequence conflict" description="In Ref. 1; AAA63563." evidence="2" ref="1">
    <original>W</original>
    <variation>R</variation>
    <location>
        <position position="103"/>
    </location>
</feature>
<feature type="sequence conflict" description="In Ref. 1; AAA63563." evidence="2" ref="1">
    <original>D</original>
    <variation>V</variation>
    <location>
        <position position="196"/>
    </location>
</feature>
<feature type="sequence conflict" description="In Ref. 1; AAA63563." evidence="2" ref="1">
    <original>Y</original>
    <variation>D</variation>
    <location>
        <position position="209"/>
    </location>
</feature>
<gene>
    <name type="primary">luxC</name>
</gene>